<proteinExistence type="inferred from homology"/>
<keyword id="KW-0963">Cytoplasm</keyword>
<keyword id="KW-0489">Methyltransferase</keyword>
<keyword id="KW-0545">Nucleotide biosynthesis</keyword>
<keyword id="KW-0808">Transferase</keyword>
<feature type="chain" id="PRO_1000000688" description="Thymidylate synthase">
    <location>
        <begin position="1"/>
        <end position="318"/>
    </location>
</feature>
<feature type="active site" description="Nucleophile" evidence="1">
    <location>
        <position position="201"/>
    </location>
</feature>
<feature type="binding site" description="in other chain" evidence="1">
    <location>
        <position position="26"/>
    </location>
    <ligand>
        <name>dUMP</name>
        <dbReference type="ChEBI" id="CHEBI:246422"/>
        <note>ligand shared between dimeric partners</note>
    </ligand>
</feature>
<feature type="binding site" evidence="1">
    <location>
        <begin position="181"/>
        <end position="182"/>
    </location>
    <ligand>
        <name>dUMP</name>
        <dbReference type="ChEBI" id="CHEBI:246422"/>
        <note>ligand shared between dimeric partners</note>
    </ligand>
</feature>
<feature type="binding site" description="in other chain" evidence="1">
    <location>
        <begin position="221"/>
        <end position="224"/>
    </location>
    <ligand>
        <name>dUMP</name>
        <dbReference type="ChEBI" id="CHEBI:246422"/>
        <note>ligand shared between dimeric partners</note>
    </ligand>
</feature>
<feature type="binding site" evidence="1">
    <location>
        <position position="224"/>
    </location>
    <ligand>
        <name>(6R)-5,10-methylene-5,6,7,8-tetrahydrofolate</name>
        <dbReference type="ChEBI" id="CHEBI:15636"/>
    </ligand>
</feature>
<feature type="binding site" description="in other chain" evidence="1">
    <location>
        <position position="232"/>
    </location>
    <ligand>
        <name>dUMP</name>
        <dbReference type="ChEBI" id="CHEBI:246422"/>
        <note>ligand shared between dimeric partners</note>
    </ligand>
</feature>
<feature type="binding site" description="in other chain" evidence="1">
    <location>
        <begin position="262"/>
        <end position="264"/>
    </location>
    <ligand>
        <name>dUMP</name>
        <dbReference type="ChEBI" id="CHEBI:246422"/>
        <note>ligand shared between dimeric partners</note>
    </ligand>
</feature>
<feature type="binding site" evidence="1">
    <location>
        <position position="317"/>
    </location>
    <ligand>
        <name>(6R)-5,10-methylene-5,6,7,8-tetrahydrofolate</name>
        <dbReference type="ChEBI" id="CHEBI:15636"/>
    </ligand>
</feature>
<comment type="function">
    <text evidence="1">Catalyzes the reductive methylation of 2'-deoxyuridine-5'-monophosphate (dUMP) to 2'-deoxythymidine-5'-monophosphate (dTMP) while utilizing 5,10-methylenetetrahydrofolate (mTHF) as the methyl donor and reductant in the reaction, yielding dihydrofolate (DHF) as a by-product. This enzymatic reaction provides an intracellular de novo source of dTMP, an essential precursor for DNA biosynthesis.</text>
</comment>
<comment type="catalytic activity">
    <reaction evidence="1">
        <text>dUMP + (6R)-5,10-methylene-5,6,7,8-tetrahydrofolate = 7,8-dihydrofolate + dTMP</text>
        <dbReference type="Rhea" id="RHEA:12104"/>
        <dbReference type="ChEBI" id="CHEBI:15636"/>
        <dbReference type="ChEBI" id="CHEBI:57451"/>
        <dbReference type="ChEBI" id="CHEBI:63528"/>
        <dbReference type="ChEBI" id="CHEBI:246422"/>
        <dbReference type="EC" id="2.1.1.45"/>
    </reaction>
</comment>
<comment type="pathway">
    <text evidence="1">Pyrimidine metabolism; dTTP biosynthesis.</text>
</comment>
<comment type="subunit">
    <text evidence="1">Homodimer.</text>
</comment>
<comment type="subcellular location">
    <subcellularLocation>
        <location evidence="1">Cytoplasm</location>
    </subcellularLocation>
</comment>
<comment type="similarity">
    <text evidence="1">Belongs to the thymidylate synthase family. Bacterial-type ThyA subfamily.</text>
</comment>
<organism>
    <name type="scientific">Staphylococcus aureus (strain bovine RF122 / ET3-1)</name>
    <dbReference type="NCBI Taxonomy" id="273036"/>
    <lineage>
        <taxon>Bacteria</taxon>
        <taxon>Bacillati</taxon>
        <taxon>Bacillota</taxon>
        <taxon>Bacilli</taxon>
        <taxon>Bacillales</taxon>
        <taxon>Staphylococcaceae</taxon>
        <taxon>Staphylococcus</taxon>
    </lineage>
</organism>
<gene>
    <name evidence="1" type="primary">thyA</name>
    <name type="ordered locus">SAB1282c</name>
</gene>
<name>TYSY_STAAB</name>
<accession>Q2YY40</accession>
<protein>
    <recommendedName>
        <fullName evidence="1">Thymidylate synthase</fullName>
        <shortName evidence="1">TS</shortName>
        <shortName evidence="1">TSase</shortName>
        <ecNumber evidence="1">2.1.1.45</ecNumber>
    </recommendedName>
</protein>
<evidence type="ECO:0000255" key="1">
    <source>
        <dbReference type="HAMAP-Rule" id="MF_00008"/>
    </source>
</evidence>
<sequence>MLNSFDAAYHSLCEEVLEIGNTRNDRTNTGTISKFGHQLRFDLSKGFPLLTTKKVSFKLVATELLWFIKGDTNIQYLLKYNNNIWNEWAFENYIKSDEYKGPDMTDFGHRALSDPEFNEQYKEQMKQFKQRILEDDTFAKQFGDLGNVYGKQWRDWVDKDGNHFDQLKTVIEQIKHNPDSRRHIVSAWNPTEIDTMALPPCHTMFQFYVQDGKLSCQLYQRSADIFLGVPFNIASYALLTHLIAKECGLEVGEFVHTFGDAHIYSNHIDAIQTQLARESFNPPTLKINSDKSIFDINYEDLEIVDYESHPAIKAPIAV</sequence>
<reference key="1">
    <citation type="journal article" date="2007" name="PLoS ONE">
        <title>Molecular correlates of host specialization in Staphylococcus aureus.</title>
        <authorList>
            <person name="Herron-Olson L."/>
            <person name="Fitzgerald J.R."/>
            <person name="Musser J.M."/>
            <person name="Kapur V."/>
        </authorList>
    </citation>
    <scope>NUCLEOTIDE SEQUENCE [LARGE SCALE GENOMIC DNA]</scope>
    <source>
        <strain>bovine RF122 / ET3-1</strain>
    </source>
</reference>
<dbReference type="EC" id="2.1.1.45" evidence="1"/>
<dbReference type="EMBL" id="AJ938182">
    <property type="protein sequence ID" value="CAI80971.1"/>
    <property type="molecule type" value="Genomic_DNA"/>
</dbReference>
<dbReference type="RefSeq" id="WP_000934885.1">
    <property type="nucleotide sequence ID" value="NC_007622.1"/>
</dbReference>
<dbReference type="SMR" id="Q2YY40"/>
<dbReference type="KEGG" id="sab:SAB1282c"/>
<dbReference type="HOGENOM" id="CLU_021669_0_2_9"/>
<dbReference type="UniPathway" id="UPA00575"/>
<dbReference type="GO" id="GO:0005829">
    <property type="term" value="C:cytosol"/>
    <property type="evidence" value="ECO:0007669"/>
    <property type="project" value="TreeGrafter"/>
</dbReference>
<dbReference type="GO" id="GO:0004799">
    <property type="term" value="F:thymidylate synthase activity"/>
    <property type="evidence" value="ECO:0007669"/>
    <property type="project" value="UniProtKB-UniRule"/>
</dbReference>
<dbReference type="GO" id="GO:0006231">
    <property type="term" value="P:dTMP biosynthetic process"/>
    <property type="evidence" value="ECO:0007669"/>
    <property type="project" value="UniProtKB-UniRule"/>
</dbReference>
<dbReference type="GO" id="GO:0006235">
    <property type="term" value="P:dTTP biosynthetic process"/>
    <property type="evidence" value="ECO:0007669"/>
    <property type="project" value="UniProtKB-UniRule"/>
</dbReference>
<dbReference type="GO" id="GO:0032259">
    <property type="term" value="P:methylation"/>
    <property type="evidence" value="ECO:0007669"/>
    <property type="project" value="UniProtKB-KW"/>
</dbReference>
<dbReference type="CDD" id="cd00351">
    <property type="entry name" value="TS_Pyrimidine_HMase"/>
    <property type="match status" value="1"/>
</dbReference>
<dbReference type="Gene3D" id="3.30.572.10">
    <property type="entry name" value="Thymidylate synthase/dCMP hydroxymethylase domain"/>
    <property type="match status" value="1"/>
</dbReference>
<dbReference type="HAMAP" id="MF_00008">
    <property type="entry name" value="Thymidy_synth_bact"/>
    <property type="match status" value="1"/>
</dbReference>
<dbReference type="InterPro" id="IPR045097">
    <property type="entry name" value="Thymidate_synth/dCMP_Mease"/>
</dbReference>
<dbReference type="InterPro" id="IPR023451">
    <property type="entry name" value="Thymidate_synth/dCMP_Mease_dom"/>
</dbReference>
<dbReference type="InterPro" id="IPR036926">
    <property type="entry name" value="Thymidate_synth/dCMP_Mease_sf"/>
</dbReference>
<dbReference type="InterPro" id="IPR000398">
    <property type="entry name" value="Thymidylate_synthase"/>
</dbReference>
<dbReference type="InterPro" id="IPR020940">
    <property type="entry name" value="Thymidylate_synthase_AS"/>
</dbReference>
<dbReference type="NCBIfam" id="NF002496">
    <property type="entry name" value="PRK01827.1-2"/>
    <property type="match status" value="1"/>
</dbReference>
<dbReference type="NCBIfam" id="TIGR03284">
    <property type="entry name" value="thym_sym"/>
    <property type="match status" value="1"/>
</dbReference>
<dbReference type="PANTHER" id="PTHR11548:SF9">
    <property type="entry name" value="THYMIDYLATE SYNTHASE"/>
    <property type="match status" value="1"/>
</dbReference>
<dbReference type="PANTHER" id="PTHR11548">
    <property type="entry name" value="THYMIDYLATE SYNTHASE 1"/>
    <property type="match status" value="1"/>
</dbReference>
<dbReference type="Pfam" id="PF00303">
    <property type="entry name" value="Thymidylat_synt"/>
    <property type="match status" value="1"/>
</dbReference>
<dbReference type="PRINTS" id="PR00108">
    <property type="entry name" value="THYMDSNTHASE"/>
</dbReference>
<dbReference type="SUPFAM" id="SSF55831">
    <property type="entry name" value="Thymidylate synthase/dCMP hydroxymethylase"/>
    <property type="match status" value="1"/>
</dbReference>
<dbReference type="PROSITE" id="PS00091">
    <property type="entry name" value="THYMIDYLATE_SYNTHASE"/>
    <property type="match status" value="1"/>
</dbReference>